<proteinExistence type="evidence at transcript level"/>
<evidence type="ECO:0000256" key="1">
    <source>
        <dbReference type="SAM" id="MobiDB-lite"/>
    </source>
</evidence>
<evidence type="ECO:0000305" key="2"/>
<dbReference type="EMBL" id="J04670">
    <property type="protein sequence ID" value="AAA29172.1"/>
    <property type="molecule type" value="mRNA"/>
</dbReference>
<dbReference type="PIR" id="B44984">
    <property type="entry name" value="B44984"/>
</dbReference>
<dbReference type="Proteomes" id="UP000025227">
    <property type="component" value="Unplaced"/>
</dbReference>
<dbReference type="GO" id="GO:0005581">
    <property type="term" value="C:collagen trimer"/>
    <property type="evidence" value="ECO:0007669"/>
    <property type="project" value="UniProtKB-KW"/>
</dbReference>
<dbReference type="GO" id="GO:0042302">
    <property type="term" value="F:structural constituent of cuticle"/>
    <property type="evidence" value="ECO:0007669"/>
    <property type="project" value="UniProtKB-KW"/>
</dbReference>
<dbReference type="InterPro" id="IPR008160">
    <property type="entry name" value="Collagen"/>
</dbReference>
<dbReference type="PANTHER" id="PTHR24637">
    <property type="entry name" value="COLLAGEN"/>
    <property type="match status" value="1"/>
</dbReference>
<dbReference type="PANTHER" id="PTHR24637:SF262">
    <property type="entry name" value="CUTICLE COLLAGEN 34-RELATED"/>
    <property type="match status" value="1"/>
</dbReference>
<dbReference type="Pfam" id="PF01391">
    <property type="entry name" value="Collagen"/>
    <property type="match status" value="2"/>
</dbReference>
<accession>P16252</accession>
<organism>
    <name type="scientific">Haemonchus contortus</name>
    <name type="common">Barber pole worm</name>
    <dbReference type="NCBI Taxonomy" id="6289"/>
    <lineage>
        <taxon>Eukaryota</taxon>
        <taxon>Metazoa</taxon>
        <taxon>Ecdysozoa</taxon>
        <taxon>Nematoda</taxon>
        <taxon>Chromadorea</taxon>
        <taxon>Rhabditida</taxon>
        <taxon>Rhabditina</taxon>
        <taxon>Rhabditomorpha</taxon>
        <taxon>Strongyloidea</taxon>
        <taxon>Trichostrongylidae</taxon>
        <taxon>Haemonchus</taxon>
    </lineage>
</organism>
<comment type="function">
    <text>Nematode cuticles are composed largely of collagen-like proteins. The cuticle functions both as an exoskeleton and as a barrier to protect the worm from its environment.</text>
</comment>
<comment type="miscellaneous">
    <text>This protein shows 4 potential triple-helical regions, which contain glycine as every third amino acid.</text>
</comment>
<comment type="miscellaneous">
    <text>In all nematode cuticle collagens, the polypeptide chains are complexed within the cuticle by disulfide bonds and other types of covalent cross-links.</text>
</comment>
<comment type="similarity">
    <text evidence="2">Belongs to the cuticular collagen family.</text>
</comment>
<reference key="1">
    <citation type="journal article" date="1989" name="Mol. Biochem. Parasitol.">
        <title>Cuticle collagen genes of Haemonchus contortus and Caenorhabditis elegans are highly conserved.</title>
        <authorList>
            <person name="Shamansky L.M."/>
            <person name="Pratt D."/>
            <person name="Boisvenue R.J."/>
            <person name="Cox G.N."/>
        </authorList>
    </citation>
    <scope>NUCLEOTIDE SEQUENCE [MRNA]</scope>
</reference>
<feature type="chain" id="PRO_0000127606" description="Cuticle collagen 2C">
    <location>
        <begin position="1" status="less than"/>
        <end position="210"/>
    </location>
</feature>
<feature type="region of interest" description="Disordered" evidence="1">
    <location>
        <begin position="11"/>
        <end position="210"/>
    </location>
</feature>
<feature type="compositionally biased region" description="Pro residues" evidence="1">
    <location>
        <begin position="40"/>
        <end position="76"/>
    </location>
</feature>
<feature type="compositionally biased region" description="Pro residues" evidence="1">
    <location>
        <begin position="88"/>
        <end position="103"/>
    </location>
</feature>
<feature type="compositionally biased region" description="Low complexity" evidence="1">
    <location>
        <begin position="105"/>
        <end position="122"/>
    </location>
</feature>
<feature type="compositionally biased region" description="Pro residues" evidence="1">
    <location>
        <begin position="123"/>
        <end position="144"/>
    </location>
</feature>
<feature type="compositionally biased region" description="Low complexity" evidence="1">
    <location>
        <begin position="167"/>
        <end position="179"/>
    </location>
</feature>
<feature type="non-terminal residue">
    <location>
        <position position="1"/>
    </location>
</feature>
<gene>
    <name type="primary">2C</name>
</gene>
<sequence>QAGYGNCQACCTGGQAGPPGMPGNPGRPGNPGAPGIPGNPGRPPVQPCDPIPIPPCKPCPQGRPGPPGPIGPPGEPGTPGNPGAPGNDAPPGPPGPKGPPGPPGKAGAPGAAGQPGANAPSEPLVPGPPGPPGPTGPEGPPGPNGAPGHPGAPGAPGEKGPRGQDGHPGAPGNAGHPGQPGQPGPPGERGVCPKYCSMDGGVFFEDGTRR</sequence>
<name>CUC2C_HAECO</name>
<keyword id="KW-0176">Collagen</keyword>
<keyword id="KW-0193">Cuticle</keyword>
<keyword id="KW-0677">Repeat</keyword>
<protein>
    <recommendedName>
        <fullName>Cuticle collagen 2C</fullName>
    </recommendedName>
</protein>